<name>LON2_SYNFM</name>
<proteinExistence type="inferred from homology"/>
<feature type="chain" id="PRO_0000396606" description="Lon protease 2">
    <location>
        <begin position="1"/>
        <end position="790"/>
    </location>
</feature>
<feature type="domain" description="Lon N-terminal" evidence="3">
    <location>
        <begin position="18"/>
        <end position="210"/>
    </location>
</feature>
<feature type="domain" description="Lon proteolytic" evidence="2">
    <location>
        <begin position="598"/>
        <end position="779"/>
    </location>
</feature>
<feature type="active site" evidence="1">
    <location>
        <position position="685"/>
    </location>
</feature>
<feature type="active site" evidence="1">
    <location>
        <position position="728"/>
    </location>
</feature>
<feature type="binding site" evidence="1">
    <location>
        <begin position="362"/>
        <end position="369"/>
    </location>
    <ligand>
        <name>ATP</name>
        <dbReference type="ChEBI" id="CHEBI:30616"/>
    </ligand>
</feature>
<organism>
    <name type="scientific">Syntrophobacter fumaroxidans (strain DSM 10017 / MPOB)</name>
    <dbReference type="NCBI Taxonomy" id="335543"/>
    <lineage>
        <taxon>Bacteria</taxon>
        <taxon>Pseudomonadati</taxon>
        <taxon>Thermodesulfobacteriota</taxon>
        <taxon>Syntrophobacteria</taxon>
        <taxon>Syntrophobacterales</taxon>
        <taxon>Syntrophobacteraceae</taxon>
        <taxon>Syntrophobacter</taxon>
    </lineage>
</organism>
<accession>A0LG61</accession>
<dbReference type="EC" id="3.4.21.53" evidence="1"/>
<dbReference type="EMBL" id="CP000478">
    <property type="protein sequence ID" value="ABK16413.1"/>
    <property type="molecule type" value="Genomic_DNA"/>
</dbReference>
<dbReference type="RefSeq" id="WP_011697586.1">
    <property type="nucleotide sequence ID" value="NC_008554.1"/>
</dbReference>
<dbReference type="SMR" id="A0LG61"/>
<dbReference type="STRING" id="335543.Sfum_0715"/>
<dbReference type="KEGG" id="sfu:Sfum_0715"/>
<dbReference type="eggNOG" id="COG0466">
    <property type="taxonomic scope" value="Bacteria"/>
</dbReference>
<dbReference type="HOGENOM" id="CLU_004109_4_3_7"/>
<dbReference type="InParanoid" id="A0LG61"/>
<dbReference type="OrthoDB" id="9803599at2"/>
<dbReference type="Proteomes" id="UP000001784">
    <property type="component" value="Chromosome"/>
</dbReference>
<dbReference type="GO" id="GO:0005737">
    <property type="term" value="C:cytoplasm"/>
    <property type="evidence" value="ECO:0007669"/>
    <property type="project" value="UniProtKB-SubCell"/>
</dbReference>
<dbReference type="GO" id="GO:0005524">
    <property type="term" value="F:ATP binding"/>
    <property type="evidence" value="ECO:0007669"/>
    <property type="project" value="UniProtKB-UniRule"/>
</dbReference>
<dbReference type="GO" id="GO:0016887">
    <property type="term" value="F:ATP hydrolysis activity"/>
    <property type="evidence" value="ECO:0007669"/>
    <property type="project" value="UniProtKB-UniRule"/>
</dbReference>
<dbReference type="GO" id="GO:0004176">
    <property type="term" value="F:ATP-dependent peptidase activity"/>
    <property type="evidence" value="ECO:0007669"/>
    <property type="project" value="UniProtKB-UniRule"/>
</dbReference>
<dbReference type="GO" id="GO:0043565">
    <property type="term" value="F:sequence-specific DNA binding"/>
    <property type="evidence" value="ECO:0007669"/>
    <property type="project" value="UniProtKB-UniRule"/>
</dbReference>
<dbReference type="GO" id="GO:0004252">
    <property type="term" value="F:serine-type endopeptidase activity"/>
    <property type="evidence" value="ECO:0007669"/>
    <property type="project" value="UniProtKB-UniRule"/>
</dbReference>
<dbReference type="GO" id="GO:0034605">
    <property type="term" value="P:cellular response to heat"/>
    <property type="evidence" value="ECO:0007669"/>
    <property type="project" value="UniProtKB-UniRule"/>
</dbReference>
<dbReference type="GO" id="GO:0006515">
    <property type="term" value="P:protein quality control for misfolded or incompletely synthesized proteins"/>
    <property type="evidence" value="ECO:0007669"/>
    <property type="project" value="UniProtKB-UniRule"/>
</dbReference>
<dbReference type="CDD" id="cd19500">
    <property type="entry name" value="RecA-like_Lon"/>
    <property type="match status" value="1"/>
</dbReference>
<dbReference type="FunFam" id="1.20.5.5270:FF:000002">
    <property type="entry name" value="Lon protease homolog"/>
    <property type="match status" value="1"/>
</dbReference>
<dbReference type="FunFam" id="3.40.50.300:FF:000382">
    <property type="entry name" value="Lon protease homolog 2, peroxisomal"/>
    <property type="match status" value="1"/>
</dbReference>
<dbReference type="Gene3D" id="1.10.8.60">
    <property type="match status" value="1"/>
</dbReference>
<dbReference type="Gene3D" id="1.20.5.5270">
    <property type="match status" value="1"/>
</dbReference>
<dbReference type="Gene3D" id="1.20.58.1480">
    <property type="match status" value="1"/>
</dbReference>
<dbReference type="Gene3D" id="3.30.230.10">
    <property type="match status" value="1"/>
</dbReference>
<dbReference type="Gene3D" id="2.30.130.40">
    <property type="entry name" value="LON domain-like"/>
    <property type="match status" value="1"/>
</dbReference>
<dbReference type="Gene3D" id="3.40.50.300">
    <property type="entry name" value="P-loop containing nucleotide triphosphate hydrolases"/>
    <property type="match status" value="1"/>
</dbReference>
<dbReference type="HAMAP" id="MF_01973">
    <property type="entry name" value="lon_bact"/>
    <property type="match status" value="1"/>
</dbReference>
<dbReference type="InterPro" id="IPR003593">
    <property type="entry name" value="AAA+_ATPase"/>
</dbReference>
<dbReference type="InterPro" id="IPR003959">
    <property type="entry name" value="ATPase_AAA_core"/>
</dbReference>
<dbReference type="InterPro" id="IPR027543">
    <property type="entry name" value="Lon_bac"/>
</dbReference>
<dbReference type="InterPro" id="IPR004815">
    <property type="entry name" value="Lon_bac/euk-typ"/>
</dbReference>
<dbReference type="InterPro" id="IPR054594">
    <property type="entry name" value="Lon_lid"/>
</dbReference>
<dbReference type="InterPro" id="IPR008269">
    <property type="entry name" value="Lon_proteolytic"/>
</dbReference>
<dbReference type="InterPro" id="IPR027065">
    <property type="entry name" value="Lon_Prtase"/>
</dbReference>
<dbReference type="InterPro" id="IPR003111">
    <property type="entry name" value="Lon_prtase_N"/>
</dbReference>
<dbReference type="InterPro" id="IPR046336">
    <property type="entry name" value="Lon_prtase_N_sf"/>
</dbReference>
<dbReference type="InterPro" id="IPR027417">
    <property type="entry name" value="P-loop_NTPase"/>
</dbReference>
<dbReference type="InterPro" id="IPR015947">
    <property type="entry name" value="PUA-like_sf"/>
</dbReference>
<dbReference type="InterPro" id="IPR020568">
    <property type="entry name" value="Ribosomal_Su5_D2-typ_SF"/>
</dbReference>
<dbReference type="InterPro" id="IPR014721">
    <property type="entry name" value="Ribsml_uS5_D2-typ_fold_subgr"/>
</dbReference>
<dbReference type="NCBIfam" id="TIGR00763">
    <property type="entry name" value="lon"/>
    <property type="match status" value="1"/>
</dbReference>
<dbReference type="PANTHER" id="PTHR10046">
    <property type="entry name" value="ATP DEPENDENT LON PROTEASE FAMILY MEMBER"/>
    <property type="match status" value="1"/>
</dbReference>
<dbReference type="Pfam" id="PF00004">
    <property type="entry name" value="AAA"/>
    <property type="match status" value="1"/>
</dbReference>
<dbReference type="Pfam" id="PF05362">
    <property type="entry name" value="Lon_C"/>
    <property type="match status" value="1"/>
</dbReference>
<dbReference type="Pfam" id="PF22667">
    <property type="entry name" value="Lon_lid"/>
    <property type="match status" value="1"/>
</dbReference>
<dbReference type="Pfam" id="PF02190">
    <property type="entry name" value="LON_substr_bdg"/>
    <property type="match status" value="1"/>
</dbReference>
<dbReference type="PIRSF" id="PIRSF001174">
    <property type="entry name" value="Lon_proteas"/>
    <property type="match status" value="1"/>
</dbReference>
<dbReference type="PRINTS" id="PR00830">
    <property type="entry name" value="ENDOLAPTASE"/>
</dbReference>
<dbReference type="SMART" id="SM00382">
    <property type="entry name" value="AAA"/>
    <property type="match status" value="1"/>
</dbReference>
<dbReference type="SMART" id="SM00464">
    <property type="entry name" value="LON"/>
    <property type="match status" value="1"/>
</dbReference>
<dbReference type="SUPFAM" id="SSF52540">
    <property type="entry name" value="P-loop containing nucleoside triphosphate hydrolases"/>
    <property type="match status" value="1"/>
</dbReference>
<dbReference type="SUPFAM" id="SSF88697">
    <property type="entry name" value="PUA domain-like"/>
    <property type="match status" value="1"/>
</dbReference>
<dbReference type="SUPFAM" id="SSF54211">
    <property type="entry name" value="Ribosomal protein S5 domain 2-like"/>
    <property type="match status" value="1"/>
</dbReference>
<dbReference type="PROSITE" id="PS51787">
    <property type="entry name" value="LON_N"/>
    <property type="match status" value="1"/>
</dbReference>
<dbReference type="PROSITE" id="PS51786">
    <property type="entry name" value="LON_PROTEOLYTIC"/>
    <property type="match status" value="1"/>
</dbReference>
<reference key="1">
    <citation type="submission" date="2006-10" db="EMBL/GenBank/DDBJ databases">
        <title>Complete sequence of Syntrophobacter fumaroxidans MPOB.</title>
        <authorList>
            <consortium name="US DOE Joint Genome Institute"/>
            <person name="Copeland A."/>
            <person name="Lucas S."/>
            <person name="Lapidus A."/>
            <person name="Barry K."/>
            <person name="Detter J.C."/>
            <person name="Glavina del Rio T."/>
            <person name="Hammon N."/>
            <person name="Israni S."/>
            <person name="Pitluck S."/>
            <person name="Goltsman E.G."/>
            <person name="Martinez M."/>
            <person name="Schmutz J."/>
            <person name="Larimer F."/>
            <person name="Land M."/>
            <person name="Hauser L."/>
            <person name="Kyrpides N."/>
            <person name="Kim E."/>
            <person name="Boone D.R."/>
            <person name="Brockman F."/>
            <person name="Culley D."/>
            <person name="Ferry J."/>
            <person name="Gunsalus R."/>
            <person name="McInerney M.J."/>
            <person name="Morrison M."/>
            <person name="Plugge C."/>
            <person name="Rohlin L."/>
            <person name="Scholten J."/>
            <person name="Sieber J."/>
            <person name="Stams A.J.M."/>
            <person name="Worm P."/>
            <person name="Henstra A.M."/>
            <person name="Richardson P."/>
        </authorList>
    </citation>
    <scope>NUCLEOTIDE SEQUENCE [LARGE SCALE GENOMIC DNA]</scope>
    <source>
        <strain>DSM 10017 / MPOB</strain>
    </source>
</reference>
<protein>
    <recommendedName>
        <fullName evidence="1">Lon protease 2</fullName>
        <ecNumber evidence="1">3.4.21.53</ecNumber>
    </recommendedName>
    <alternativeName>
        <fullName evidence="1">ATP-dependent protease La 2</fullName>
    </alternativeName>
</protein>
<gene>
    <name evidence="1" type="primary">lon2</name>
    <name type="ordered locus">Sfum_0715</name>
</gene>
<evidence type="ECO:0000255" key="1">
    <source>
        <dbReference type="HAMAP-Rule" id="MF_01973"/>
    </source>
</evidence>
<evidence type="ECO:0000255" key="2">
    <source>
        <dbReference type="PROSITE-ProRule" id="PRU01122"/>
    </source>
</evidence>
<evidence type="ECO:0000255" key="3">
    <source>
        <dbReference type="PROSITE-ProRule" id="PRU01123"/>
    </source>
</evidence>
<sequence length="790" mass="87220">MASEGEGVLKKEGLPEKLRILPLRNMVLYPDLVLPLHVTRAGYRRLADEVYRENGLLAVVAQRNEEAEEASPADIYQVGTVGSIIKLLKQADGTYQIIVGASEKVRLRNISQAGDYLEAEVEAVPEDRSTSPEIEALALNLRMGFQKFVSLASLPLDLANFALNAERPMQLVYAVASHLALSVVERQSILEMPETKAALEHVTFYMTRQLEKLELAQRIQDRVKSVMDKRQRDYYLREQLQAIRKELGEGEDTSEEVHELAARLRDLEMPAEARGAAEKEIERLGRMSPSAPEYHVSRNYLDWLLEMPWSVSTEDRIDVRQAAVILDEDHFDLEKVKRRILEYLAVLQLKKDLKGPILCFVGPPGVGKTSLGQSIARTLGRKFLRISLGGVRDEAEIRGHRRTYVGALPGRIVQGLRRVGSNNPVFMLDEIDKIGMDFRGDPSSALLEVLDPEQNFSFSDHYLGVPFDLSRVMFIATGNLLDTVPAALKDRMEVIEIPGYTAEEKLEIARKFLVERETANHGLTSDHIRIGEDAILEIIRSYTREAGVRSLQRNLASVCRNTAKAIAEGASGPIHIDASGIPEILGPVQFLPETATRSWGCGIATGLAWTPSGGQLIFIETLRTHGNGKLLLTGQLGEVMKESATAALTFVRAHAADLEIEGEEFDRSDIHVHVPAGATPKDGPSAGAPMVVALASLMTGREVRKDVAMTGEITLRGDILPVGGIKEKVLAARRAGVKEIMIPHANMKDLADIPDHLRRDMTIHELQTISDVLQLALLPSPRQGGSSPRS</sequence>
<comment type="function">
    <text evidence="1">ATP-dependent serine protease that mediates the selective degradation of mutant and abnormal proteins as well as certain short-lived regulatory proteins. Required for cellular homeostasis and for survival from DNA damage and developmental changes induced by stress. Degrades polypeptides processively to yield small peptide fragments that are 5 to 10 amino acids long. Binds to DNA in a double-stranded, site-specific manner.</text>
</comment>
<comment type="catalytic activity">
    <reaction evidence="1">
        <text>Hydrolysis of proteins in presence of ATP.</text>
        <dbReference type="EC" id="3.4.21.53"/>
    </reaction>
</comment>
<comment type="subunit">
    <text evidence="1">Homohexamer. Organized in a ring with a central cavity.</text>
</comment>
<comment type="subcellular location">
    <subcellularLocation>
        <location evidence="1">Cytoplasm</location>
    </subcellularLocation>
</comment>
<comment type="induction">
    <text evidence="1">By heat shock.</text>
</comment>
<comment type="similarity">
    <text evidence="1">Belongs to the peptidase S16 family.</text>
</comment>
<keyword id="KW-0067">ATP-binding</keyword>
<keyword id="KW-0963">Cytoplasm</keyword>
<keyword id="KW-0378">Hydrolase</keyword>
<keyword id="KW-0547">Nucleotide-binding</keyword>
<keyword id="KW-0645">Protease</keyword>
<keyword id="KW-1185">Reference proteome</keyword>
<keyword id="KW-0720">Serine protease</keyword>
<keyword id="KW-0346">Stress response</keyword>